<feature type="chain" id="PRO_0000313727" description="Very-long-chain (3R)-3-hydroxyacyl-CoA dehydratase">
    <location>
        <begin position="1"/>
        <end position="362"/>
    </location>
</feature>
<feature type="topological domain" description="Cytoplasmic" evidence="3">
    <location>
        <begin position="1"/>
        <end position="149"/>
    </location>
</feature>
<feature type="transmembrane region" description="Helical" evidence="3">
    <location>
        <begin position="150"/>
        <end position="170"/>
    </location>
</feature>
<feature type="topological domain" description="Lumenal" evidence="3">
    <location>
        <begin position="171"/>
        <end position="189"/>
    </location>
</feature>
<feature type="transmembrane region" description="Helical" evidence="3">
    <location>
        <begin position="190"/>
        <end position="210"/>
    </location>
</feature>
<feature type="topological domain" description="Cytoplasmic" evidence="3">
    <location>
        <begin position="211"/>
        <end position="212"/>
    </location>
</feature>
<feature type="transmembrane region" description="Helical" evidence="3">
    <location>
        <begin position="213"/>
        <end position="233"/>
    </location>
</feature>
<feature type="topological domain" description="Lumenal" evidence="3">
    <location>
        <begin position="234"/>
        <end position="242"/>
    </location>
</feature>
<feature type="transmembrane region" description="Helical" evidence="3">
    <location>
        <begin position="243"/>
        <end position="263"/>
    </location>
</feature>
<feature type="topological domain" description="Cytoplasmic" evidence="3">
    <location>
        <begin position="264"/>
        <end position="282"/>
    </location>
</feature>
<feature type="transmembrane region" description="Helical" evidence="3">
    <location>
        <begin position="283"/>
        <end position="303"/>
    </location>
</feature>
<feature type="topological domain" description="Lumenal" evidence="3">
    <location>
        <begin position="304"/>
        <end position="319"/>
    </location>
</feature>
<feature type="transmembrane region" description="Helical" evidence="3">
    <location>
        <begin position="320"/>
        <end position="340"/>
    </location>
</feature>
<feature type="topological domain" description="Cytoplasmic" evidence="3">
    <location>
        <begin position="341"/>
        <end position="362"/>
    </location>
</feature>
<feature type="domain" description="CS" evidence="4">
    <location>
        <begin position="5"/>
        <end position="94"/>
    </location>
</feature>
<feature type="coiled-coil region" evidence="3">
    <location>
        <begin position="111"/>
        <end position="135"/>
    </location>
</feature>
<feature type="active site" evidence="1">
    <location>
        <position position="286"/>
    </location>
</feature>
<feature type="active site" evidence="1">
    <location>
        <position position="293"/>
    </location>
</feature>
<keyword id="KW-0175">Coiled coil</keyword>
<keyword id="KW-0256">Endoplasmic reticulum</keyword>
<keyword id="KW-0275">Fatty acid biosynthesis</keyword>
<keyword id="KW-0276">Fatty acid metabolism</keyword>
<keyword id="KW-0444">Lipid biosynthesis</keyword>
<keyword id="KW-0443">Lipid metabolism</keyword>
<keyword id="KW-0456">Lyase</keyword>
<keyword id="KW-0472">Membrane</keyword>
<keyword id="KW-1185">Reference proteome</keyword>
<keyword id="KW-0812">Transmembrane</keyword>
<keyword id="KW-1133">Transmembrane helix</keyword>
<accession>Q5ZM57</accession>
<gene>
    <name evidence="5" type="primary">HACD3</name>
    <name evidence="5" type="synonym">PTPLAD1</name>
    <name evidence="6" type="ORF">RCJMB04_3b6</name>
</gene>
<dbReference type="EC" id="4.2.1.134" evidence="2"/>
<dbReference type="EMBL" id="AJ719527">
    <property type="protein sequence ID" value="CAG31186.1"/>
    <property type="molecule type" value="mRNA"/>
</dbReference>
<dbReference type="RefSeq" id="NP_001007829.1">
    <property type="nucleotide sequence ID" value="NM_001007828.2"/>
</dbReference>
<dbReference type="FunCoup" id="Q5ZM57">
    <property type="interactions" value="887"/>
</dbReference>
<dbReference type="STRING" id="9031.ENSGALP00000012079"/>
<dbReference type="PaxDb" id="9031-ENSGALP00000012079"/>
<dbReference type="GeneID" id="415539"/>
<dbReference type="KEGG" id="gga:415539"/>
<dbReference type="CTD" id="51495"/>
<dbReference type="VEuPathDB" id="HostDB:geneid_415539"/>
<dbReference type="eggNOG" id="KOG3187">
    <property type="taxonomic scope" value="Eukaryota"/>
</dbReference>
<dbReference type="HOGENOM" id="CLU_046712_0_0_1"/>
<dbReference type="InParanoid" id="Q5ZM57"/>
<dbReference type="OMA" id="SYLVMSH"/>
<dbReference type="OrthoDB" id="2157530at2759"/>
<dbReference type="PhylomeDB" id="Q5ZM57"/>
<dbReference type="Reactome" id="R-GGA-75876">
    <property type="pathway name" value="Synthesis of very long-chain fatty acyl-CoAs"/>
</dbReference>
<dbReference type="UniPathway" id="UPA00094"/>
<dbReference type="PRO" id="PR:Q5ZM57"/>
<dbReference type="Proteomes" id="UP000000539">
    <property type="component" value="Chromosome 10"/>
</dbReference>
<dbReference type="Bgee" id="ENSGALG00000007481">
    <property type="expression patterns" value="Expressed in liver and 13 other cell types or tissues"/>
</dbReference>
<dbReference type="GO" id="GO:0005783">
    <property type="term" value="C:endoplasmic reticulum"/>
    <property type="evidence" value="ECO:0000250"/>
    <property type="project" value="UniProtKB"/>
</dbReference>
<dbReference type="GO" id="GO:0005789">
    <property type="term" value="C:endoplasmic reticulum membrane"/>
    <property type="evidence" value="ECO:0000318"/>
    <property type="project" value="GO_Central"/>
</dbReference>
<dbReference type="GO" id="GO:0018812">
    <property type="term" value="F:3-hydroxyacyl-CoA dehydratase activity"/>
    <property type="evidence" value="ECO:0000318"/>
    <property type="project" value="GO_Central"/>
</dbReference>
<dbReference type="GO" id="GO:0102158">
    <property type="term" value="F:very-long-chain (3R)-3-hydroxyacyl-CoA dehydratase activity"/>
    <property type="evidence" value="ECO:0000250"/>
    <property type="project" value="UniProtKB"/>
</dbReference>
<dbReference type="GO" id="GO:0030497">
    <property type="term" value="P:fatty acid elongation"/>
    <property type="evidence" value="ECO:0000250"/>
    <property type="project" value="UniProtKB"/>
</dbReference>
<dbReference type="GO" id="GO:0030148">
    <property type="term" value="P:sphingolipid biosynthetic process"/>
    <property type="evidence" value="ECO:0000318"/>
    <property type="project" value="GO_Central"/>
</dbReference>
<dbReference type="GO" id="GO:0042761">
    <property type="term" value="P:very long-chain fatty acid biosynthetic process"/>
    <property type="evidence" value="ECO:0000250"/>
    <property type="project" value="UniProtKB"/>
</dbReference>
<dbReference type="CDD" id="cd06465">
    <property type="entry name" value="p23_hB-ind1_like"/>
    <property type="match status" value="1"/>
</dbReference>
<dbReference type="FunFam" id="2.60.40.790:FF:000016">
    <property type="entry name" value="Very-long-chain (3R)-3-hydroxyacyl-CoA dehydratase"/>
    <property type="match status" value="1"/>
</dbReference>
<dbReference type="Gene3D" id="2.60.40.790">
    <property type="match status" value="1"/>
</dbReference>
<dbReference type="InterPro" id="IPR007052">
    <property type="entry name" value="CS_dom"/>
</dbReference>
<dbReference type="InterPro" id="IPR008978">
    <property type="entry name" value="HSP20-like_chaperone"/>
</dbReference>
<dbReference type="InterPro" id="IPR007482">
    <property type="entry name" value="Tyr_Pase-like_PTPLA"/>
</dbReference>
<dbReference type="PANTHER" id="PTHR11035">
    <property type="entry name" value="VERY-LONG-CHAIN (3R)-3-HYDROXYACYL-COA DEHYDRATASE"/>
    <property type="match status" value="1"/>
</dbReference>
<dbReference type="PANTHER" id="PTHR11035:SF20">
    <property type="entry name" value="VERY-LONG-CHAIN (3R)-3-HYDROXYACYL-COA DEHYDRATASE 3"/>
    <property type="match status" value="1"/>
</dbReference>
<dbReference type="Pfam" id="PF04387">
    <property type="entry name" value="PTPLA"/>
    <property type="match status" value="1"/>
</dbReference>
<dbReference type="SUPFAM" id="SSF49764">
    <property type="entry name" value="HSP20-like chaperones"/>
    <property type="match status" value="1"/>
</dbReference>
<dbReference type="PROSITE" id="PS51203">
    <property type="entry name" value="CS"/>
    <property type="match status" value="1"/>
</dbReference>
<organism>
    <name type="scientific">Gallus gallus</name>
    <name type="common">Chicken</name>
    <dbReference type="NCBI Taxonomy" id="9031"/>
    <lineage>
        <taxon>Eukaryota</taxon>
        <taxon>Metazoa</taxon>
        <taxon>Chordata</taxon>
        <taxon>Craniata</taxon>
        <taxon>Vertebrata</taxon>
        <taxon>Euteleostomi</taxon>
        <taxon>Archelosauria</taxon>
        <taxon>Archosauria</taxon>
        <taxon>Dinosauria</taxon>
        <taxon>Saurischia</taxon>
        <taxon>Theropoda</taxon>
        <taxon>Coelurosauria</taxon>
        <taxon>Aves</taxon>
        <taxon>Neognathae</taxon>
        <taxon>Galloanserae</taxon>
        <taxon>Galliformes</taxon>
        <taxon>Phasianidae</taxon>
        <taxon>Phasianinae</taxon>
        <taxon>Gallus</taxon>
    </lineage>
</organism>
<protein>
    <recommendedName>
        <fullName evidence="5">Very-long-chain (3R)-3-hydroxyacyl-CoA dehydratase</fullName>
        <ecNumber evidence="2">4.2.1.134</ecNumber>
    </recommendedName>
    <alternativeName>
        <fullName evidence="5">3-hydroxyacyl-CoA dehydratase</fullName>
        <shortName evidence="5">HACD</shortName>
    </alternativeName>
    <alternativeName>
        <fullName evidence="5">Protein-tyrosine phosphatase-like A domain-containing protein 1</fullName>
    </alternativeName>
</protein>
<evidence type="ECO:0000250" key="1">
    <source>
        <dbReference type="UniProtKB" id="P40857"/>
    </source>
</evidence>
<evidence type="ECO:0000250" key="2">
    <source>
        <dbReference type="UniProtKB" id="Q9P035"/>
    </source>
</evidence>
<evidence type="ECO:0000255" key="3"/>
<evidence type="ECO:0000255" key="4">
    <source>
        <dbReference type="PROSITE-ProRule" id="PRU00547"/>
    </source>
</evidence>
<evidence type="ECO:0000305" key="5"/>
<evidence type="ECO:0000312" key="6">
    <source>
        <dbReference type="EMBL" id="CAG31186.1"/>
    </source>
</evidence>
<name>HACD3_CHICK</name>
<proteinExistence type="evidence at transcript level"/>
<reference key="1">
    <citation type="journal article" date="2005" name="Genome Biol.">
        <title>Full-length cDNAs from chicken bursal lymphocytes to facilitate gene function analysis.</title>
        <authorList>
            <person name="Caldwell R.B."/>
            <person name="Kierzek A.M."/>
            <person name="Arakawa H."/>
            <person name="Bezzubov Y."/>
            <person name="Zaim J."/>
            <person name="Fiedler P."/>
            <person name="Kutter S."/>
            <person name="Blagodatski A."/>
            <person name="Kostovska D."/>
            <person name="Koter M."/>
            <person name="Plachy J."/>
            <person name="Carninci P."/>
            <person name="Hayashizaki Y."/>
            <person name="Buerstedde J.-M."/>
        </authorList>
    </citation>
    <scope>NUCLEOTIDE SEQUENCE [LARGE SCALE MRNA]</scope>
    <source>
        <strain>CB</strain>
        <tissue>Bursa of Fabricius</tissue>
    </source>
</reference>
<comment type="function">
    <text evidence="2">Catalyzes the third of the four reactions of the long-chain fatty acids elongation cycle. This endoplasmic reticulum-bound enzymatic process, allows the addition of two carbons to the chain of long- and very long-chain fatty acids/VLCFAs per cycle. This enzyme catalyzes the dehydration of the 3-hydroxyacyl-CoA intermediate into trans-2,3-enoyl-CoA, within each cycle of fatty acid elongation. Thereby, it participates in the production of VLCFAs of different chain lengths that are involved in multiple biological processes as precursors of membrane lipids and lipid mediators. Involved in Rac1-signaling pathways leading to the modulation of gene expression.</text>
</comment>
<comment type="catalytic activity">
    <reaction evidence="2">
        <text>a very-long-chain (3R)-3-hydroxyacyl-CoA = a very-long-chain (2E)-enoyl-CoA + H2O</text>
        <dbReference type="Rhea" id="RHEA:45812"/>
        <dbReference type="ChEBI" id="CHEBI:15377"/>
        <dbReference type="ChEBI" id="CHEBI:83728"/>
        <dbReference type="ChEBI" id="CHEBI:85440"/>
        <dbReference type="EC" id="4.2.1.134"/>
    </reaction>
    <physiologicalReaction direction="left-to-right" evidence="2">
        <dbReference type="Rhea" id="RHEA:45813"/>
    </physiologicalReaction>
</comment>
<comment type="catalytic activity">
    <reaction evidence="2">
        <text>(3R)-hydroxyhexadecanoyl-CoA = (2E)-hexadecenoyl-CoA + H2O</text>
        <dbReference type="Rhea" id="RHEA:39159"/>
        <dbReference type="ChEBI" id="CHEBI:15377"/>
        <dbReference type="ChEBI" id="CHEBI:61526"/>
        <dbReference type="ChEBI" id="CHEBI:74278"/>
    </reaction>
    <physiologicalReaction direction="left-to-right" evidence="2">
        <dbReference type="Rhea" id="RHEA:39160"/>
    </physiologicalReaction>
</comment>
<comment type="pathway">
    <text evidence="2">Lipid metabolism; fatty acid biosynthesis.</text>
</comment>
<comment type="subcellular location">
    <subcellularLocation>
        <location evidence="2">Endoplasmic reticulum membrane</location>
        <topology evidence="2">Multi-pass membrane protein</topology>
    </subcellularLocation>
</comment>
<comment type="similarity">
    <text evidence="5">Belongs to the very long-chain fatty acids dehydratase HACD family.</text>
</comment>
<comment type="caution">
    <text evidence="2">Shares some similarity with tyrosine phosphatase proteins but it has probably no phosphatase activity.</text>
</comment>
<sequence>MADCSLRPHVHWAQRHRELYLRVELSDVKNPDVSIADNVLRFRAQGHGAKGDNIYEFQIEFLEPVEPKPVCRVTQRQLNITVQKKESSWWERLTKQEKRPLFLAPDFDRWLDESDAEMELKEKEEEKINKMKIESRVPKDPFKHLKKGYLIMYNLVQFLGFSWIFVNMTVRLFILGKDSFYDTFHTIADMMYFCQTLALMEILNSLIGLVRSPLIPAVIQVFGRNFILFVVLGSLEEMQSKAVVFFLFYFWSIIELFRYPYYMLSCMGIEWKPLTWLRYTSWIPLYPLGGLAEAVCLIQSIPIFSETGKFSLGLPNPLNVTIQFSFLLQMYLIALFLGLFVNFRYLYKQRKQHLGPKKRKMK</sequence>